<accession>Q6BJ96</accession>
<accession>B5RV28</accession>
<comment type="function">
    <text evidence="1">Alpha-1,2-mannosyltransferase involved in glycosylphosphatidylinositol-anchor biosynthesis. Transfers a fourth mannose to trimannosyl-GPIs during GPI precursor assembly. The presence of a fourth mannose in GPI is essential in fungi (By similarity).</text>
</comment>
<comment type="pathway">
    <text>Glycolipid biosynthesis; glycosylphosphatidylinositol-anchor biosynthesis.</text>
</comment>
<comment type="subcellular location">
    <subcellularLocation>
        <location evidence="1">Endoplasmic reticulum membrane</location>
        <topology evidence="1">Multi-pass membrane protein</topology>
    </subcellularLocation>
</comment>
<comment type="similarity">
    <text evidence="3">Belongs to the glycosyltransferase 22 family. PIGZ subfamily.</text>
</comment>
<comment type="sequence caution" evidence="3">
    <conflict type="erroneous initiation">
        <sequence resource="EMBL-CDS" id="CAR65907"/>
    </conflict>
</comment>
<dbReference type="EC" id="2.4.1.-"/>
<dbReference type="EMBL" id="CR382139">
    <property type="protein sequence ID" value="CAR65907.1"/>
    <property type="status" value="ALT_INIT"/>
    <property type="molecule type" value="Genomic_DNA"/>
</dbReference>
<dbReference type="RefSeq" id="XP_002770572.1">
    <property type="nucleotide sequence ID" value="XM_002770526.1"/>
</dbReference>
<dbReference type="FunCoup" id="Q6BJ96">
    <property type="interactions" value="56"/>
</dbReference>
<dbReference type="STRING" id="284592.Q6BJ96"/>
<dbReference type="CAZy" id="GT22">
    <property type="family name" value="Glycosyltransferase Family 22"/>
</dbReference>
<dbReference type="GlyCosmos" id="Q6BJ96">
    <property type="glycosylation" value="3 sites, No reported glycans"/>
</dbReference>
<dbReference type="GeneID" id="8999120"/>
<dbReference type="KEGG" id="dha:DEHA2G04114g"/>
<dbReference type="eggNOG" id="KOG4123">
    <property type="taxonomic scope" value="Eukaryota"/>
</dbReference>
<dbReference type="HOGENOM" id="CLU_022957_2_0_1"/>
<dbReference type="InParanoid" id="Q6BJ96"/>
<dbReference type="OrthoDB" id="10066429at2759"/>
<dbReference type="UniPathway" id="UPA00196"/>
<dbReference type="Proteomes" id="UP000000599">
    <property type="component" value="Chromosome G"/>
</dbReference>
<dbReference type="GO" id="GO:0005789">
    <property type="term" value="C:endoplasmic reticulum membrane"/>
    <property type="evidence" value="ECO:0007669"/>
    <property type="project" value="UniProtKB-SubCell"/>
</dbReference>
<dbReference type="GO" id="GO:0000026">
    <property type="term" value="F:alpha-1,2-mannosyltransferase activity"/>
    <property type="evidence" value="ECO:0007669"/>
    <property type="project" value="TreeGrafter"/>
</dbReference>
<dbReference type="GO" id="GO:0006506">
    <property type="term" value="P:GPI anchor biosynthetic process"/>
    <property type="evidence" value="ECO:0007669"/>
    <property type="project" value="UniProtKB-UniPathway"/>
</dbReference>
<dbReference type="InterPro" id="IPR005599">
    <property type="entry name" value="GPI_mannosylTrfase"/>
</dbReference>
<dbReference type="PANTHER" id="PTHR22760">
    <property type="entry name" value="GLYCOSYLTRANSFERASE"/>
    <property type="match status" value="1"/>
</dbReference>
<dbReference type="PANTHER" id="PTHR22760:SF3">
    <property type="entry name" value="GPI MANNOSYLTRANSFERASE 4"/>
    <property type="match status" value="1"/>
</dbReference>
<dbReference type="Pfam" id="PF03901">
    <property type="entry name" value="Glyco_transf_22"/>
    <property type="match status" value="1"/>
</dbReference>
<keyword id="KW-0256">Endoplasmic reticulum</keyword>
<keyword id="KW-0325">Glycoprotein</keyword>
<keyword id="KW-0328">Glycosyltransferase</keyword>
<keyword id="KW-0337">GPI-anchor biosynthesis</keyword>
<keyword id="KW-0472">Membrane</keyword>
<keyword id="KW-1185">Reference proteome</keyword>
<keyword id="KW-0808">Transferase</keyword>
<keyword id="KW-0812">Transmembrane</keyword>
<keyword id="KW-1133">Transmembrane helix</keyword>
<name>SMP3_DEBHA</name>
<proteinExistence type="inferred from homology"/>
<sequence length="535" mass="61750">MSLSLDFNWRYVYLIAIGLKFVLALSNSYIHPDEHFQSFEVLTNKIFSFTTTTPWEFSSDTPARSFGPLYLFYAPLLYSIKLVGYELSPLQIWYMARLQNVLIGWVITDMCIYRLLPTKPERIKGLFYTSTSYITLVYQSHCFSNSIETWLVLICVLVINDLRFIQESNVPELQSQRQYQKLFWFGALVSIGIFNRITFPAFLALPSLYLMKYFRHNKMSAIFSLLGFMLPTIAIILLDTFEFNGSIDDILKHPLDFNSYVITPLNNLIYNSKVENLSNHGLHPYYTHLLVNLPQILGPGLFFMVSNFKNQYWKTTPFLAVISGVSVLSLIPHQELRFLIPIVPLVCCCFDLKNISSASKGERITKAPPMVSVLMNLWYLFNILLAVLMGVYHQGGIVPALDYFHSNIFQENSRQSVQIWWRTYSPPPWILGDKLDTLQVLTVTDDSPQFELDSSKSNYLIDAMGSDYTHVSKLIESFKDFSGSIYLIAPIASIRKHYDISMHQVWNYTHHLDLDHIDFSDFQSLKPGLGIYELL</sequence>
<gene>
    <name type="primary">SMP3</name>
    <name type="ordered locus">DEHA2G04114g</name>
</gene>
<evidence type="ECO:0000250" key="1"/>
<evidence type="ECO:0000255" key="2"/>
<evidence type="ECO:0000305" key="3"/>
<protein>
    <recommendedName>
        <fullName>GPI mannosyltransferase 4</fullName>
        <ecNumber>2.4.1.-</ecNumber>
    </recommendedName>
    <alternativeName>
        <fullName>GPI mannosyltransferase IV</fullName>
        <shortName>GPI-MT-IV</shortName>
    </alternativeName>
</protein>
<feature type="chain" id="PRO_0000246276" description="GPI mannosyltransferase 4">
    <location>
        <begin position="1"/>
        <end position="535"/>
    </location>
</feature>
<feature type="topological domain" description="Cytoplasmic" evidence="2">
    <location>
        <begin position="1"/>
        <end position="10"/>
    </location>
</feature>
<feature type="transmembrane region" description="Helical" evidence="2">
    <location>
        <begin position="11"/>
        <end position="31"/>
    </location>
</feature>
<feature type="topological domain" description="Lumenal" evidence="2">
    <location>
        <begin position="32"/>
        <end position="91"/>
    </location>
</feature>
<feature type="transmembrane region" description="Helical" evidence="2">
    <location>
        <begin position="92"/>
        <end position="112"/>
    </location>
</feature>
<feature type="topological domain" description="Cytoplasmic" evidence="2">
    <location>
        <begin position="113"/>
        <end position="141"/>
    </location>
</feature>
<feature type="transmembrane region" description="Helical" evidence="2">
    <location>
        <begin position="142"/>
        <end position="162"/>
    </location>
</feature>
<feature type="topological domain" description="Lumenal" evidence="2">
    <location>
        <begin position="163"/>
        <end position="181"/>
    </location>
</feature>
<feature type="transmembrane region" description="Helical" evidence="2">
    <location>
        <begin position="182"/>
        <end position="202"/>
    </location>
</feature>
<feature type="topological domain" description="Cytoplasmic" evidence="2">
    <location>
        <begin position="203"/>
        <end position="220"/>
    </location>
</feature>
<feature type="transmembrane region" description="Helical" evidence="2">
    <location>
        <begin position="221"/>
        <end position="241"/>
    </location>
</feature>
<feature type="topological domain" description="Lumenal" evidence="2">
    <location>
        <begin position="242"/>
        <end position="284"/>
    </location>
</feature>
<feature type="transmembrane region" description="Helical" evidence="2">
    <location>
        <begin position="285"/>
        <end position="305"/>
    </location>
</feature>
<feature type="topological domain" description="Cytoplasmic" evidence="2">
    <location>
        <begin position="306"/>
        <end position="311"/>
    </location>
</feature>
<feature type="transmembrane region" description="Helical" evidence="2">
    <location>
        <begin position="312"/>
        <end position="332"/>
    </location>
</feature>
<feature type="topological domain" description="Lumenal" evidence="2">
    <location>
        <begin position="333"/>
        <end position="337"/>
    </location>
</feature>
<feature type="transmembrane region" description="Helical" evidence="2">
    <location>
        <begin position="338"/>
        <end position="358"/>
    </location>
</feature>
<feature type="topological domain" description="Cytoplasmic" evidence="2">
    <location>
        <begin position="359"/>
        <end position="370"/>
    </location>
</feature>
<feature type="transmembrane region" description="Helical" evidence="2">
    <location>
        <begin position="371"/>
        <end position="391"/>
    </location>
</feature>
<feature type="topological domain" description="Lumenal" evidence="2">
    <location>
        <begin position="392"/>
        <end position="535"/>
    </location>
</feature>
<feature type="glycosylation site" description="N-linked (GlcNAc...) asparagine" evidence="2">
    <location>
        <position position="244"/>
    </location>
</feature>
<feature type="glycosylation site" description="N-linked (GlcNAc...) asparagine" evidence="2">
    <location>
        <position position="276"/>
    </location>
</feature>
<feature type="glycosylation site" description="N-linked (GlcNAc...) asparagine" evidence="2">
    <location>
        <position position="507"/>
    </location>
</feature>
<reference key="1">
    <citation type="journal article" date="2004" name="Nature">
        <title>Genome evolution in yeasts.</title>
        <authorList>
            <person name="Dujon B."/>
            <person name="Sherman D."/>
            <person name="Fischer G."/>
            <person name="Durrens P."/>
            <person name="Casaregola S."/>
            <person name="Lafontaine I."/>
            <person name="de Montigny J."/>
            <person name="Marck C."/>
            <person name="Neuveglise C."/>
            <person name="Talla E."/>
            <person name="Goffard N."/>
            <person name="Frangeul L."/>
            <person name="Aigle M."/>
            <person name="Anthouard V."/>
            <person name="Babour A."/>
            <person name="Barbe V."/>
            <person name="Barnay S."/>
            <person name="Blanchin S."/>
            <person name="Beckerich J.-M."/>
            <person name="Beyne E."/>
            <person name="Bleykasten C."/>
            <person name="Boisrame A."/>
            <person name="Boyer J."/>
            <person name="Cattolico L."/>
            <person name="Confanioleri F."/>
            <person name="de Daruvar A."/>
            <person name="Despons L."/>
            <person name="Fabre E."/>
            <person name="Fairhead C."/>
            <person name="Ferry-Dumazet H."/>
            <person name="Groppi A."/>
            <person name="Hantraye F."/>
            <person name="Hennequin C."/>
            <person name="Jauniaux N."/>
            <person name="Joyet P."/>
            <person name="Kachouri R."/>
            <person name="Kerrest A."/>
            <person name="Koszul R."/>
            <person name="Lemaire M."/>
            <person name="Lesur I."/>
            <person name="Ma L."/>
            <person name="Muller H."/>
            <person name="Nicaud J.-M."/>
            <person name="Nikolski M."/>
            <person name="Oztas S."/>
            <person name="Ozier-Kalogeropoulos O."/>
            <person name="Pellenz S."/>
            <person name="Potier S."/>
            <person name="Richard G.-F."/>
            <person name="Straub M.-L."/>
            <person name="Suleau A."/>
            <person name="Swennen D."/>
            <person name="Tekaia F."/>
            <person name="Wesolowski-Louvel M."/>
            <person name="Westhof E."/>
            <person name="Wirth B."/>
            <person name="Zeniou-Meyer M."/>
            <person name="Zivanovic Y."/>
            <person name="Bolotin-Fukuhara M."/>
            <person name="Thierry A."/>
            <person name="Bouchier C."/>
            <person name="Caudron B."/>
            <person name="Scarpelli C."/>
            <person name="Gaillardin C."/>
            <person name="Weissenbach J."/>
            <person name="Wincker P."/>
            <person name="Souciet J.-L."/>
        </authorList>
    </citation>
    <scope>NUCLEOTIDE SEQUENCE [LARGE SCALE GENOMIC DNA]</scope>
    <source>
        <strain>ATCC 36239 / CBS 767 / BCRC 21394 / JCM 1990 / NBRC 0083 / IGC 2968</strain>
    </source>
</reference>
<organism>
    <name type="scientific">Debaryomyces hansenii (strain ATCC 36239 / CBS 767 / BCRC 21394 / JCM 1990 / NBRC 0083 / IGC 2968)</name>
    <name type="common">Yeast</name>
    <name type="synonym">Torulaspora hansenii</name>
    <dbReference type="NCBI Taxonomy" id="284592"/>
    <lineage>
        <taxon>Eukaryota</taxon>
        <taxon>Fungi</taxon>
        <taxon>Dikarya</taxon>
        <taxon>Ascomycota</taxon>
        <taxon>Saccharomycotina</taxon>
        <taxon>Pichiomycetes</taxon>
        <taxon>Debaryomycetaceae</taxon>
        <taxon>Debaryomyces</taxon>
    </lineage>
</organism>